<keyword id="KW-0067">ATP-binding</keyword>
<keyword id="KW-0090">Biological rhythms</keyword>
<keyword id="KW-0418">Kinase</keyword>
<keyword id="KW-0547">Nucleotide-binding</keyword>
<keyword id="KW-0597">Phosphoprotein</keyword>
<keyword id="KW-0808">Transferase</keyword>
<keyword id="KW-0902">Two-component regulatory system</keyword>
<feature type="chain" id="PRO_1000088440" description="Adaptive-response sensory kinase SasA">
    <location>
        <begin position="1"/>
        <end position="384"/>
    </location>
</feature>
<feature type="domain" description="Histidine kinase" evidence="1">
    <location>
        <begin position="162"/>
        <end position="384"/>
    </location>
</feature>
<feature type="modified residue" description="Phosphohistidine; by autocatalysis" evidence="1">
    <location>
        <position position="165"/>
    </location>
</feature>
<reference key="1">
    <citation type="journal article" date="2007" name="DNA Res.">
        <title>Complete genomic structure of the bloom-forming toxic cyanobacterium Microcystis aeruginosa NIES-843.</title>
        <authorList>
            <person name="Kaneko T."/>
            <person name="Nakajima N."/>
            <person name="Okamoto S."/>
            <person name="Suzuki I."/>
            <person name="Tanabe Y."/>
            <person name="Tamaoki M."/>
            <person name="Nakamura Y."/>
            <person name="Kasai F."/>
            <person name="Watanabe A."/>
            <person name="Kawashima K."/>
            <person name="Kishida Y."/>
            <person name="Ono A."/>
            <person name="Shimizu Y."/>
            <person name="Takahashi C."/>
            <person name="Minami C."/>
            <person name="Fujishiro T."/>
            <person name="Kohara M."/>
            <person name="Katoh M."/>
            <person name="Nakazaki N."/>
            <person name="Nakayama S."/>
            <person name="Yamada M."/>
            <person name="Tabata S."/>
            <person name="Watanabe M.M."/>
        </authorList>
    </citation>
    <scope>NUCLEOTIDE SEQUENCE [LARGE SCALE GENOMIC DNA]</scope>
    <source>
        <strain>NIES-843 / IAM M-247</strain>
    </source>
</reference>
<dbReference type="EC" id="2.7.13.3" evidence="1"/>
<dbReference type="EMBL" id="AP009552">
    <property type="protein sequence ID" value="BAG05904.1"/>
    <property type="molecule type" value="Genomic_DNA"/>
</dbReference>
<dbReference type="RefSeq" id="WP_012268234.1">
    <property type="nucleotide sequence ID" value="NC_010296.1"/>
</dbReference>
<dbReference type="SMR" id="B0JK50"/>
<dbReference type="STRING" id="449447.MAE_60820"/>
<dbReference type="PaxDb" id="449447-MAE_60820"/>
<dbReference type="EnsemblBacteria" id="BAG05904">
    <property type="protein sequence ID" value="BAG05904"/>
    <property type="gene ID" value="MAE_60820"/>
</dbReference>
<dbReference type="KEGG" id="mar:MAE_60820"/>
<dbReference type="PATRIC" id="fig|449447.4.peg.5568"/>
<dbReference type="eggNOG" id="COG2205">
    <property type="taxonomic scope" value="Bacteria"/>
</dbReference>
<dbReference type="HOGENOM" id="CLU_723030_0_0_3"/>
<dbReference type="BioCyc" id="MAER449447:MAE_RS26550-MONOMER"/>
<dbReference type="Proteomes" id="UP000001510">
    <property type="component" value="Chromosome"/>
</dbReference>
<dbReference type="GO" id="GO:0005524">
    <property type="term" value="F:ATP binding"/>
    <property type="evidence" value="ECO:0007669"/>
    <property type="project" value="UniProtKB-KW"/>
</dbReference>
<dbReference type="GO" id="GO:0000155">
    <property type="term" value="F:phosphorelay sensor kinase activity"/>
    <property type="evidence" value="ECO:0007669"/>
    <property type="project" value="InterPro"/>
</dbReference>
<dbReference type="GO" id="GO:0007623">
    <property type="term" value="P:circadian rhythm"/>
    <property type="evidence" value="ECO:0007669"/>
    <property type="project" value="UniProtKB-UniRule"/>
</dbReference>
<dbReference type="CDD" id="cd00075">
    <property type="entry name" value="HATPase"/>
    <property type="match status" value="1"/>
</dbReference>
<dbReference type="CDD" id="cd00082">
    <property type="entry name" value="HisKA"/>
    <property type="match status" value="1"/>
</dbReference>
<dbReference type="CDD" id="cd02978">
    <property type="entry name" value="KaiB_like"/>
    <property type="match status" value="1"/>
</dbReference>
<dbReference type="FunFam" id="1.10.287.130:FF:000154">
    <property type="entry name" value="Adaptive-response sensory kinase"/>
    <property type="match status" value="1"/>
</dbReference>
<dbReference type="FunFam" id="3.30.565.10:FF:000006">
    <property type="entry name" value="Sensor histidine kinase WalK"/>
    <property type="match status" value="1"/>
</dbReference>
<dbReference type="Gene3D" id="1.10.287.130">
    <property type="match status" value="1"/>
</dbReference>
<dbReference type="Gene3D" id="3.40.30.10">
    <property type="entry name" value="Glutaredoxin"/>
    <property type="match status" value="1"/>
</dbReference>
<dbReference type="Gene3D" id="3.30.565.10">
    <property type="entry name" value="Histidine kinase-like ATPase, C-terminal domain"/>
    <property type="match status" value="1"/>
</dbReference>
<dbReference type="HAMAP" id="MF_01837">
    <property type="entry name" value="Kinase_SasA"/>
    <property type="match status" value="1"/>
</dbReference>
<dbReference type="InterPro" id="IPR036890">
    <property type="entry name" value="HATPase_C_sf"/>
</dbReference>
<dbReference type="InterPro" id="IPR005467">
    <property type="entry name" value="His_kinase_dom"/>
</dbReference>
<dbReference type="InterPro" id="IPR003661">
    <property type="entry name" value="HisK_dim/P_dom"/>
</dbReference>
<dbReference type="InterPro" id="IPR036097">
    <property type="entry name" value="HisK_dim/P_sf"/>
</dbReference>
<dbReference type="InterPro" id="IPR011649">
    <property type="entry name" value="KaiB_domain"/>
</dbReference>
<dbReference type="InterPro" id="IPR023527">
    <property type="entry name" value="Kinase_SasA"/>
</dbReference>
<dbReference type="InterPro" id="IPR050736">
    <property type="entry name" value="Sensor_HK_Regulatory"/>
</dbReference>
<dbReference type="InterPro" id="IPR004358">
    <property type="entry name" value="Sig_transdc_His_kin-like_C"/>
</dbReference>
<dbReference type="InterPro" id="IPR036249">
    <property type="entry name" value="Thioredoxin-like_sf"/>
</dbReference>
<dbReference type="NCBIfam" id="NF006800">
    <property type="entry name" value="PRK09303.1"/>
    <property type="match status" value="1"/>
</dbReference>
<dbReference type="PANTHER" id="PTHR43711:SF26">
    <property type="entry name" value="SENSOR HISTIDINE KINASE RCSC"/>
    <property type="match status" value="1"/>
</dbReference>
<dbReference type="PANTHER" id="PTHR43711">
    <property type="entry name" value="TWO-COMPONENT HISTIDINE KINASE"/>
    <property type="match status" value="1"/>
</dbReference>
<dbReference type="Pfam" id="PF02518">
    <property type="entry name" value="HATPase_c"/>
    <property type="match status" value="1"/>
</dbReference>
<dbReference type="Pfam" id="PF00512">
    <property type="entry name" value="HisKA"/>
    <property type="match status" value="1"/>
</dbReference>
<dbReference type="Pfam" id="PF07689">
    <property type="entry name" value="KaiB"/>
    <property type="match status" value="1"/>
</dbReference>
<dbReference type="PRINTS" id="PR00344">
    <property type="entry name" value="BCTRLSENSOR"/>
</dbReference>
<dbReference type="SMART" id="SM00387">
    <property type="entry name" value="HATPase_c"/>
    <property type="match status" value="1"/>
</dbReference>
<dbReference type="SMART" id="SM00388">
    <property type="entry name" value="HisKA"/>
    <property type="match status" value="1"/>
</dbReference>
<dbReference type="SMART" id="SM01248">
    <property type="entry name" value="KaiB"/>
    <property type="match status" value="1"/>
</dbReference>
<dbReference type="SUPFAM" id="SSF55874">
    <property type="entry name" value="ATPase domain of HSP90 chaperone/DNA topoisomerase II/histidine kinase"/>
    <property type="match status" value="1"/>
</dbReference>
<dbReference type="SUPFAM" id="SSF47384">
    <property type="entry name" value="Homodimeric domain of signal transducing histidine kinase"/>
    <property type="match status" value="1"/>
</dbReference>
<dbReference type="SUPFAM" id="SSF52833">
    <property type="entry name" value="Thioredoxin-like"/>
    <property type="match status" value="1"/>
</dbReference>
<dbReference type="PROSITE" id="PS50109">
    <property type="entry name" value="HIS_KIN"/>
    <property type="match status" value="1"/>
</dbReference>
<proteinExistence type="inferred from homology"/>
<accession>B0JK50</accession>
<protein>
    <recommendedName>
        <fullName evidence="1">Adaptive-response sensory kinase SasA</fullName>
        <ecNumber evidence="1">2.7.13.3</ecNumber>
    </recommendedName>
    <alternativeName>
        <fullName evidence="1">Sensor histidine kinase SasA</fullName>
    </alternativeName>
</protein>
<comment type="function">
    <text evidence="1">Member of the two-component regulatory system SasA/RpaA involved in genome-wide circadian gene expression. One of several clock output pathways. Participates in the Kai clock protein complex, the main circadian regulator in cyanobacteria, via its interaction with KaiC. KaiC enhances the autophosphorylation activity of SasA, which then transfers its phosphate group to RpaA to activate it. In addition to its output function, recruits fold-shifted KaiB (KaiB(fs)) to KaiC to cooperatively form the KaiB(6):KaiC(6) complex (independent of SasA kinase activity). Required for robustness of the circadian rhythm of gene expression and is involved in clock output, also required for adaptation to light/dark cycles.</text>
</comment>
<comment type="catalytic activity">
    <reaction evidence="1">
        <text>ATP + protein L-histidine = ADP + protein N-phospho-L-histidine.</text>
        <dbReference type="EC" id="2.7.13.3"/>
    </reaction>
</comment>
<comment type="subunit">
    <text evidence="1">Homooligomerizes. Interacts with KaiC. Participates in the KaiABC clock complex, whose core is composed of a KaiC homohexamer, 6 KaiB and up to 6 KaiA dimers. SasA and KaiB(fs) compete to bind to KaiC.</text>
</comment>
<comment type="domain">
    <text evidence="1">The N-terminus interacts with KaiC, while the C-terminal histidine kinase domain autophosphorylates and is probably responsible for self-oligomerization. The N-terminal domain stimulates the C-terminus to autophosphorylate.</text>
</comment>
<gene>
    <name evidence="1" type="primary">sasA</name>
    <name type="ordered locus">MAE_60820</name>
</gene>
<sequence length="384" mass="44103">MLPSNEPLTALGRETTTPLSIQLLLFVDDRPSSQEIIRQIQSYLQSLKSDYPIDLQIIEIRQQPHLVEHFRLVATPALVKIAPGPRHTLAGSNLVEQFKKWLVRWQKAIKEEVKNHHAEDAQLQEVEHSGELIRIADEVFRLKQEKEELLEQLKFKDQILAMLAHDLRSPLTAASIAVETLELAYHQPDTERSLQLREQLHQQARKQFRIMNRLITDILQASKSMAAQFTLHQSKFYLQSLCQEILSQFTDTFQEKTLIFQSDIPQDLPPVYADEELIRQVIINLLENGIKYTPAGGEITLSVLHRTTQKVQVSISDTGPGIPEEKQEHIFEGHVRLKRDEGKEGYGIGLSVCRKIIRAHYGQIWVDSVPDHGSSFHFTLPVYR</sequence>
<name>SASA_MICAN</name>
<evidence type="ECO:0000255" key="1">
    <source>
        <dbReference type="HAMAP-Rule" id="MF_01837"/>
    </source>
</evidence>
<organism>
    <name type="scientific">Microcystis aeruginosa (strain NIES-843 / IAM M-2473)</name>
    <dbReference type="NCBI Taxonomy" id="449447"/>
    <lineage>
        <taxon>Bacteria</taxon>
        <taxon>Bacillati</taxon>
        <taxon>Cyanobacteriota</taxon>
        <taxon>Cyanophyceae</taxon>
        <taxon>Oscillatoriophycideae</taxon>
        <taxon>Chroococcales</taxon>
        <taxon>Microcystaceae</taxon>
        <taxon>Microcystis</taxon>
    </lineage>
</organism>